<sequence>MSTLKITGMTCDSCAVHVKDALEKVPGVQSADVSYAKGSAKLAIEVGTSPDALTAAVAGLGYRATLADAPSVSTPGGLLDKMRDLLGRNDKTGSSGALHIAVIGSGGAAMAAALKAVEQGARVTLIERGTIGGTCVNVGCVPSKIMIRAAHIAHLRRESPFDGGIAATTPTIQRTALLAQQQARVDELRHAKYEGILEGNPAITVLHGSARFKDNRNLIVQLNDGGERVVAFDRCLIATGASPAVPPIPGLKDTPYWTSTEALVSETIPKRLAVIGSSVVALELAQAFARLGAKVTILARSTLFFREDPAIGEAVTAAFRMEGIEVREHTQASQVAYINGVRDGEFVLTTAHGELRADKLLVATGRAPNTRKLALDATGVTLTPQGAIVIDPGMRTSVEHIYAAGDCTDQPQFVYVAAAAGTRAAINMTGGDAALNLTAMPAVVFTDPQVATVGYSEAEAHHDGIKTDSRTLTLDNVPRALANFDTRGFIKLVVEEGSGRLIGVQAVAPEAGELIQTAALAIRNRMTVQELADQLFPYLTMVEGLKLAAQTFNKDVKQLSCCAG</sequence>
<feature type="chain" id="PRO_0000068001" description="Mercuric reductase">
    <location>
        <begin position="1"/>
        <end position="564"/>
    </location>
</feature>
<feature type="domain" description="HMA" evidence="2">
    <location>
        <begin position="1"/>
        <end position="65"/>
    </location>
</feature>
<feature type="binding site" evidence="2">
    <location>
        <position position="11"/>
    </location>
    <ligand>
        <name>a metal cation</name>
        <dbReference type="ChEBI" id="CHEBI:25213"/>
    </ligand>
</feature>
<feature type="binding site" evidence="2">
    <location>
        <position position="14"/>
    </location>
    <ligand>
        <name>a metal cation</name>
        <dbReference type="ChEBI" id="CHEBI:25213"/>
    </ligand>
</feature>
<feature type="binding site" evidence="1">
    <location>
        <position position="109"/>
    </location>
    <ligand>
        <name>FAD</name>
        <dbReference type="ChEBI" id="CHEBI:57692"/>
    </ligand>
</feature>
<feature type="binding site" evidence="1">
    <location>
        <position position="129"/>
    </location>
    <ligand>
        <name>FAD</name>
        <dbReference type="ChEBI" id="CHEBI:57692"/>
    </ligand>
</feature>
<feature type="binding site" evidence="1">
    <location>
        <position position="134"/>
    </location>
    <ligand>
        <name>FAD</name>
        <dbReference type="ChEBI" id="CHEBI:57692"/>
    </ligand>
</feature>
<feature type="binding site" evidence="1">
    <location>
        <position position="144"/>
    </location>
    <ligand>
        <name>FAD</name>
        <dbReference type="ChEBI" id="CHEBI:57692"/>
    </ligand>
</feature>
<feature type="binding site" evidence="1">
    <location>
        <position position="210"/>
    </location>
    <ligand>
        <name>FAD</name>
        <dbReference type="ChEBI" id="CHEBI:57692"/>
    </ligand>
</feature>
<feature type="binding site" evidence="1">
    <location>
        <position position="406"/>
    </location>
    <ligand>
        <name>FAD</name>
        <dbReference type="ChEBI" id="CHEBI:57692"/>
    </ligand>
</feature>
<feature type="binding site" evidence="1">
    <location>
        <position position="414"/>
    </location>
    <ligand>
        <name>FAD</name>
        <dbReference type="ChEBI" id="CHEBI:57692"/>
    </ligand>
</feature>
<feature type="binding site" evidence="1">
    <location>
        <position position="561"/>
    </location>
    <ligand>
        <name>Hg(2+)</name>
        <dbReference type="ChEBI" id="CHEBI:16793"/>
    </ligand>
</feature>
<feature type="binding site" evidence="1">
    <location>
        <position position="562"/>
    </location>
    <ligand>
        <name>Hg(2+)</name>
        <dbReference type="ChEBI" id="CHEBI:16793"/>
    </ligand>
</feature>
<feature type="disulfide bond" description="Redox-active" evidence="1">
    <location>
        <begin position="135"/>
        <end position="140"/>
    </location>
</feature>
<feature type="sequence variant" description="In plasmid NR1.">
    <original>P</original>
    <variation>A</variation>
    <location>
        <position position="70"/>
    </location>
</feature>
<feature type="sequence variant" description="In plasmid NR1.">
    <original>VR</original>
    <variation>EG</variation>
    <location>
        <begin position="341"/>
        <end position="342"/>
    </location>
</feature>
<proteinExistence type="inferred from homology"/>
<gene>
    <name type="primary">merA</name>
</gene>
<geneLocation type="plasmid">
    <name>IncFII R100</name>
    <name>NR1</name>
</geneLocation>
<name>MERA_SHIFL</name>
<protein>
    <recommendedName>
        <fullName>Mercuric reductase</fullName>
        <ecNumber evidence="1">1.16.1.1</ecNumber>
    </recommendedName>
    <alternativeName>
        <fullName>Hg(II) reductase</fullName>
    </alternativeName>
</protein>
<dbReference type="EC" id="1.16.1.1" evidence="1"/>
<dbReference type="EMBL" id="J01730">
    <property type="protein sequence ID" value="AAA92263.1"/>
    <property type="molecule type" value="Genomic_DNA"/>
</dbReference>
<dbReference type="EMBL" id="K03089">
    <property type="protein sequence ID" value="AAB59078.1"/>
    <property type="molecule type" value="Genomic_DNA"/>
</dbReference>
<dbReference type="PIR" id="A22799">
    <property type="entry name" value="RDEBHA"/>
</dbReference>
<dbReference type="SMR" id="P08332"/>
<dbReference type="GO" id="GO:0050660">
    <property type="term" value="F:flavin adenine dinucleotide binding"/>
    <property type="evidence" value="ECO:0007669"/>
    <property type="project" value="InterPro"/>
</dbReference>
<dbReference type="GO" id="GO:0016152">
    <property type="term" value="F:mercury (II) reductase (NADP+) activity"/>
    <property type="evidence" value="ECO:0007669"/>
    <property type="project" value="UniProtKB-EC"/>
</dbReference>
<dbReference type="GO" id="GO:0045340">
    <property type="term" value="F:mercury ion binding"/>
    <property type="evidence" value="ECO:0007669"/>
    <property type="project" value="InterPro"/>
</dbReference>
<dbReference type="GO" id="GO:0003955">
    <property type="term" value="F:NAD(P)H dehydrogenase (quinone) activity"/>
    <property type="evidence" value="ECO:0007669"/>
    <property type="project" value="TreeGrafter"/>
</dbReference>
<dbReference type="GO" id="GO:0050661">
    <property type="term" value="F:NADP binding"/>
    <property type="evidence" value="ECO:0007669"/>
    <property type="project" value="InterPro"/>
</dbReference>
<dbReference type="GO" id="GO:0016668">
    <property type="term" value="F:oxidoreductase activity, acting on a sulfur group of donors, NAD(P) as acceptor"/>
    <property type="evidence" value="ECO:0007669"/>
    <property type="project" value="InterPro"/>
</dbReference>
<dbReference type="GO" id="GO:0050787">
    <property type="term" value="P:detoxification of mercury ion"/>
    <property type="evidence" value="ECO:0007669"/>
    <property type="project" value="InterPro"/>
</dbReference>
<dbReference type="CDD" id="cd00371">
    <property type="entry name" value="HMA"/>
    <property type="match status" value="1"/>
</dbReference>
<dbReference type="FunFam" id="3.30.390.30:FF:000001">
    <property type="entry name" value="Dihydrolipoyl dehydrogenase"/>
    <property type="match status" value="1"/>
</dbReference>
<dbReference type="Gene3D" id="3.30.390.30">
    <property type="match status" value="1"/>
</dbReference>
<dbReference type="Gene3D" id="3.30.70.100">
    <property type="match status" value="1"/>
</dbReference>
<dbReference type="Gene3D" id="3.50.50.60">
    <property type="entry name" value="FAD/NAD(P)-binding domain"/>
    <property type="match status" value="2"/>
</dbReference>
<dbReference type="InterPro" id="IPR036188">
    <property type="entry name" value="FAD/NAD-bd_sf"/>
</dbReference>
<dbReference type="InterPro" id="IPR023753">
    <property type="entry name" value="FAD/NAD-binding_dom"/>
</dbReference>
<dbReference type="InterPro" id="IPR016156">
    <property type="entry name" value="FAD/NAD-linked_Rdtase_dimer_sf"/>
</dbReference>
<dbReference type="InterPro" id="IPR017969">
    <property type="entry name" value="Heavy-metal-associated_CS"/>
</dbReference>
<dbReference type="InterPro" id="IPR006121">
    <property type="entry name" value="HMA_dom"/>
</dbReference>
<dbReference type="InterPro" id="IPR036163">
    <property type="entry name" value="HMA_dom_sf"/>
</dbReference>
<dbReference type="InterPro" id="IPR021179">
    <property type="entry name" value="Mercury_reductase_MerA"/>
</dbReference>
<dbReference type="InterPro" id="IPR001100">
    <property type="entry name" value="Pyr_nuc-diS_OxRdtase"/>
</dbReference>
<dbReference type="InterPro" id="IPR004099">
    <property type="entry name" value="Pyr_nucl-diS_OxRdtase_dimer"/>
</dbReference>
<dbReference type="InterPro" id="IPR012999">
    <property type="entry name" value="Pyr_OxRdtase_I_AS"/>
</dbReference>
<dbReference type="NCBIfam" id="TIGR02053">
    <property type="entry name" value="MerA"/>
    <property type="match status" value="1"/>
</dbReference>
<dbReference type="NCBIfam" id="NF010311">
    <property type="entry name" value="PRK13748.1"/>
    <property type="match status" value="1"/>
</dbReference>
<dbReference type="PANTHER" id="PTHR43014">
    <property type="entry name" value="MERCURIC REDUCTASE"/>
    <property type="match status" value="1"/>
</dbReference>
<dbReference type="PANTHER" id="PTHR43014:SF2">
    <property type="entry name" value="MERCURIC REDUCTASE"/>
    <property type="match status" value="1"/>
</dbReference>
<dbReference type="Pfam" id="PF00403">
    <property type="entry name" value="HMA"/>
    <property type="match status" value="1"/>
</dbReference>
<dbReference type="Pfam" id="PF07992">
    <property type="entry name" value="Pyr_redox_2"/>
    <property type="match status" value="1"/>
</dbReference>
<dbReference type="Pfam" id="PF02852">
    <property type="entry name" value="Pyr_redox_dim"/>
    <property type="match status" value="1"/>
</dbReference>
<dbReference type="PIRSF" id="PIRSF000350">
    <property type="entry name" value="Mercury_reductase_MerA"/>
    <property type="match status" value="1"/>
</dbReference>
<dbReference type="PRINTS" id="PR00945">
    <property type="entry name" value="HGRDTASE"/>
</dbReference>
<dbReference type="SUPFAM" id="SSF51905">
    <property type="entry name" value="FAD/NAD(P)-binding domain"/>
    <property type="match status" value="1"/>
</dbReference>
<dbReference type="SUPFAM" id="SSF55424">
    <property type="entry name" value="FAD/NAD-linked reductases, dimerisation (C-terminal) domain"/>
    <property type="match status" value="1"/>
</dbReference>
<dbReference type="SUPFAM" id="SSF55008">
    <property type="entry name" value="HMA, heavy metal-associated domain"/>
    <property type="match status" value="1"/>
</dbReference>
<dbReference type="PROSITE" id="PS01047">
    <property type="entry name" value="HMA_1"/>
    <property type="match status" value="1"/>
</dbReference>
<dbReference type="PROSITE" id="PS50846">
    <property type="entry name" value="HMA_2"/>
    <property type="match status" value="1"/>
</dbReference>
<dbReference type="PROSITE" id="PS00076">
    <property type="entry name" value="PYRIDINE_REDOX_1"/>
    <property type="match status" value="1"/>
</dbReference>
<evidence type="ECO:0000250" key="1">
    <source>
        <dbReference type="UniProtKB" id="P00392"/>
    </source>
</evidence>
<evidence type="ECO:0000255" key="2">
    <source>
        <dbReference type="PROSITE-ProRule" id="PRU00280"/>
    </source>
</evidence>
<evidence type="ECO:0000305" key="3"/>
<comment type="function">
    <text evidence="1">Resistance to Hg(2+) in bacteria appears to be governed by a specialized system which includes mercuric reductase. MerA protein is responsible for volatilizing mercury as Hg(0).</text>
</comment>
<comment type="catalytic activity">
    <reaction evidence="1">
        <text>Hg + NADP(+) + H(+) = Hg(2+) + NADPH</text>
        <dbReference type="Rhea" id="RHEA:23856"/>
        <dbReference type="ChEBI" id="CHEBI:15378"/>
        <dbReference type="ChEBI" id="CHEBI:16170"/>
        <dbReference type="ChEBI" id="CHEBI:16793"/>
        <dbReference type="ChEBI" id="CHEBI:57783"/>
        <dbReference type="ChEBI" id="CHEBI:58349"/>
        <dbReference type="EC" id="1.16.1.1"/>
    </reaction>
</comment>
<comment type="cofactor">
    <cofactor evidence="1">
        <name>FAD</name>
        <dbReference type="ChEBI" id="CHEBI:57692"/>
    </cofactor>
    <text evidence="1">Binds 1 FAD per subunit.</text>
</comment>
<comment type="subunit">
    <text evidence="1">Homodimer.</text>
</comment>
<comment type="miscellaneous">
    <text evidence="1">The active site is a redox-active disulfide bond.</text>
</comment>
<comment type="similarity">
    <text evidence="3">Belongs to the class-I pyridine nucleotide-disulfide oxidoreductase family.</text>
</comment>
<accession>P08332</accession>
<accession>P07045</accession>
<organism>
    <name type="scientific">Shigella flexneri</name>
    <dbReference type="NCBI Taxonomy" id="623"/>
    <lineage>
        <taxon>Bacteria</taxon>
        <taxon>Pseudomonadati</taxon>
        <taxon>Pseudomonadota</taxon>
        <taxon>Gammaproteobacteria</taxon>
        <taxon>Enterobacterales</taxon>
        <taxon>Enterobacteriaceae</taxon>
        <taxon>Shigella</taxon>
    </lineage>
</organism>
<keyword id="KW-1015">Disulfide bond</keyword>
<keyword id="KW-0274">FAD</keyword>
<keyword id="KW-0285">Flavoprotein</keyword>
<keyword id="KW-0475">Mercuric resistance</keyword>
<keyword id="KW-0476">Mercury</keyword>
<keyword id="KW-0479">Metal-binding</keyword>
<keyword id="KW-0521">NADP</keyword>
<keyword id="KW-0560">Oxidoreductase</keyword>
<keyword id="KW-0614">Plasmid</keyword>
<keyword id="KW-0676">Redox-active center</keyword>
<keyword id="KW-0814">Transposable element</keyword>
<reference key="1">
    <citation type="journal article" date="1985" name="Gene">
        <title>Mercuric reductase structural genes from plasmid R100 and transposon Tn501: functional domains of the enzyme.</title>
        <authorList>
            <person name="Misra T.K."/>
            <person name="Brown N.L."/>
            <person name="Haberstroh L."/>
            <person name="Schmidt A."/>
            <person name="Goddette D."/>
            <person name="Silver S."/>
        </authorList>
    </citation>
    <scope>NUCLEOTIDE SEQUENCE [GENOMIC DNA]</scope>
</reference>
<reference key="2">
    <citation type="journal article" date="1984" name="J. Mol. Appl. Genet.">
        <title>The DNA sequence of the mercury resistance operon of the IncFII plasmid NR1.</title>
        <authorList>
            <person name="Barrineau P."/>
            <person name="Gilbert P."/>
            <person name="Jackson W.J."/>
            <person name="Jones C.S."/>
            <person name="Summers A.O."/>
            <person name="Wisdom S."/>
        </authorList>
    </citation>
    <scope>NUCLEOTIDE SEQUENCE [GENOMIC DNA]</scope>
    <source>
        <transposon>Tn21</transposon>
    </source>
</reference>
<reference key="3">
    <citation type="submission" date="1986-09" db="EMBL/GenBank/DDBJ databases">
        <authorList>
            <person name="Summers A.O."/>
        </authorList>
    </citation>
    <scope>SEQUENCE REVISION</scope>
</reference>